<geneLocation type="mitochondrion"/>
<feature type="chain" id="PRO_0000130333" description="Small ribosomal subunit protein uS3m">
    <location>
        <begin position="1"/>
        <end position="227"/>
    </location>
</feature>
<keyword id="KW-0496">Mitochondrion</keyword>
<keyword id="KW-1185">Reference proteome</keyword>
<keyword id="KW-0687">Ribonucleoprotein</keyword>
<keyword id="KW-0689">Ribosomal protein</keyword>
<reference key="1">
    <citation type="journal article" date="1991" name="Curr. Genet.">
        <title>Characterization of a novel open reading frame, urf a, in the mitochondrial genome of fission yeast: correlation of urf a mutations with a mitochondrial mutator phenotype and a possible role of frameshifting in urf a expression.</title>
        <authorList>
            <person name="Zimmer M."/>
            <person name="Krabusch M."/>
            <person name="Wolf K."/>
        </authorList>
    </citation>
    <scope>NUCLEOTIDE SEQUENCE [GENOMIC DNA]</scope>
    <source>
        <strain>AD7-50</strain>
    </source>
</reference>
<reference key="2">
    <citation type="journal article" date="1990" name="Nucleic Acids Res.">
        <title>Nucleotide sequence of the unassigned reading frame urf a in the mitochondrial genome of three Schizosaccharomyces pombe strains.</title>
        <authorList>
            <person name="Zimmer M."/>
            <person name="Schiebener T."/>
            <person name="Krabusch M."/>
            <person name="Wolf K."/>
        </authorList>
    </citation>
    <scope>NUCLEOTIDE SEQUENCE [GENOMIC DNA]</scope>
    <source>
        <strain>AD7-50</strain>
    </source>
</reference>
<reference key="3">
    <citation type="book" date="1993" name="Genetic Maps (6th edition)">
        <title>The mitochondrial genome of Schizosaccharomyces pombe.</title>
        <editorList>
            <person name="O'Brien S.J."/>
        </editorList>
        <authorList>
            <person name="Lang B.F."/>
        </authorList>
    </citation>
    <scope>NUCLEOTIDE SEQUENCE [LARGE SCALE GENOMIC DNA]</scope>
    <source>
        <strain>AD7-50</strain>
    </source>
</reference>
<comment type="function">
    <text evidence="1">Essential for mitochondrial protein synthesis and required for the maturation of small ribosomal subunits.</text>
</comment>
<comment type="function">
    <text evidence="1">Component of the mitochondrial ribosome (mitoribosome), a dedicated translation machinery responsible for the synthesis of mitochondrial genome-encoded proteins, including at least some of the essential transmembrane subunits of the mitochondrial respiratory chain. The mitoribosomes are attached to the mitochondrial inner membrane and translation products are cotranslationally integrated into the membrane. uS3m is essential for mitochondrial protein synthesis and required for the maturation of small ribosomal subunits.</text>
</comment>
<comment type="subunit">
    <text evidence="1">Component of the mitochondrial small ribosomal subunit (mt-SSU). Mature yeast 74S mitochondrial ribosomes consist of a small (37S) and a large (54S) subunit. The 37S small subunit contains a 15S ribosomal RNA (15S mt-rRNA) and at least 32 different proteins. The 54S large subunit contains a 21S rRNA (21S mt-rRNA) and at least 45 different proteins. uS3m, uS4m and uS5m form the narrow entry site of the mRNA channel.</text>
</comment>
<comment type="subcellular location">
    <subcellularLocation>
        <location evidence="1">Mitochondrion</location>
    </subcellularLocation>
</comment>
<comment type="similarity">
    <text evidence="2">Belongs to the universal ribosomal protein uS3 family.</text>
</comment>
<protein>
    <recommendedName>
        <fullName evidence="2">Small ribosomal subunit protein uS3m</fullName>
    </recommendedName>
    <alternativeName>
        <fullName>Ribosomal protein var1, mitochondrial</fullName>
    </alternativeName>
</protein>
<gene>
    <name type="primary">var1</name>
    <name type="ORF">SPMIT.08</name>
</gene>
<name>RMAR_SCHPO</name>
<evidence type="ECO:0000250" key="1">
    <source>
        <dbReference type="UniProtKB" id="P02381"/>
    </source>
</evidence>
<evidence type="ECO:0000305" key="2"/>
<organism>
    <name type="scientific">Schizosaccharomyces pombe (strain 972 / ATCC 24843)</name>
    <name type="common">Fission yeast</name>
    <dbReference type="NCBI Taxonomy" id="284812"/>
    <lineage>
        <taxon>Eukaryota</taxon>
        <taxon>Fungi</taxon>
        <taxon>Dikarya</taxon>
        <taxon>Ascomycota</taxon>
        <taxon>Taphrinomycotina</taxon>
        <taxon>Schizosaccharomycetes</taxon>
        <taxon>Schizosaccharomycetales</taxon>
        <taxon>Schizosaccharomycetaceae</taxon>
        <taxon>Schizosaccharomyces</taxon>
    </lineage>
</organism>
<accession>P21547</accession>
<accession>O21422</accession>
<proteinExistence type="inferred from homology"/>
<sequence length="227" mass="25349">MQKNNLKNLITTIVTNAFFNQKANFSIPLKGVIGEKRPSILIGNININFKSDSLIEVSFPYYPLLNKNYPNPSIISNIIQKALSNHLLYSSKNYSFIVNIRALPISTPYGSSLIFSKYIAIIIGSNPKIASTLWIDPKRFINLPKLQSDSIFKILGLNVPKGWKGIHISLNLIKWNSLSSRGRITNIIKGSVPLTNNSNGYDESSLAIYSKMGTIQIKVRLSYSSNL</sequence>
<dbReference type="EMBL" id="X54733">
    <property type="protein sequence ID" value="CAA38530.1"/>
    <property type="molecule type" value="Genomic_DNA"/>
</dbReference>
<dbReference type="EMBL" id="X54421">
    <property type="protein sequence ID" value="CAA38290.1"/>
    <property type="molecule type" value="Genomic_DNA"/>
</dbReference>
<dbReference type="PIR" id="S78201">
    <property type="entry name" value="S78201"/>
</dbReference>
<dbReference type="RefSeq" id="NP_039505.1">
    <property type="nucleotide sequence ID" value="NC_001326.1"/>
</dbReference>
<dbReference type="ComplexPortal" id="CPX-10315">
    <property type="entry name" value="37S mitochondrial small ribosomal subunit"/>
</dbReference>
<dbReference type="STRING" id="284812.P21547"/>
<dbReference type="PaxDb" id="4896-SPMIT.08.1"/>
<dbReference type="EnsemblFungi" id="SPMIT.08.1">
    <property type="protein sequence ID" value="SPMIT.08.1:pep"/>
    <property type="gene ID" value="SPMIT.08"/>
</dbReference>
<dbReference type="PomBase" id="SPMIT.08">
    <property type="gene designation" value="var1"/>
</dbReference>
<dbReference type="VEuPathDB" id="FungiDB:SPMIT.08"/>
<dbReference type="HOGENOM" id="CLU_1220309_0_0_1"/>
<dbReference type="InParanoid" id="P21547"/>
<dbReference type="PRO" id="PR:P21547"/>
<dbReference type="Proteomes" id="UP000002485">
    <property type="component" value="Mitochondrion"/>
</dbReference>
<dbReference type="GO" id="GO:0005763">
    <property type="term" value="C:mitochondrial small ribosomal subunit"/>
    <property type="evidence" value="ECO:0000266"/>
    <property type="project" value="PomBase"/>
</dbReference>
<dbReference type="GO" id="GO:0003735">
    <property type="term" value="F:structural constituent of ribosome"/>
    <property type="evidence" value="ECO:0007669"/>
    <property type="project" value="InterPro"/>
</dbReference>
<dbReference type="GO" id="GO:0032543">
    <property type="term" value="P:mitochondrial translation"/>
    <property type="evidence" value="ECO:0000266"/>
    <property type="project" value="PomBase"/>
</dbReference>
<dbReference type="InterPro" id="IPR007980">
    <property type="entry name" value="Ribosomal_uS3m_fun"/>
</dbReference>
<dbReference type="Pfam" id="PF05316">
    <property type="entry name" value="VAR1"/>
    <property type="match status" value="1"/>
</dbReference>